<sequence>MKKYRKILAMLAVLAIVLVLSGCSNTPITDKSTGFWDGLIILNFSRAIIWLSNLFGHSYGLGIIVFTLIIRIIILPLMIFQTRNMVAMQEVQPQMKALQKKYSSRDMETQQKLQAEMKKLYAKHGVHPMASMLPLLVQLPILIALYQAIWRTQALKTGSFLWLQLGSKDPYYVLPILAAIFTFASSWLAMKSQPEQNGMTTSMTYLMPVIILITAINVPSALSLYWVISNAFQVGQTLLLQNPFKINREREAKKQAERDRKRTLEKARKRAIRNHKR</sequence>
<comment type="function">
    <text evidence="1">Required for the insertion and/or proper folding and/or complex formation of integral membrane proteins into the membrane. Involved in integration of membrane proteins that insert both dependently and independently of the Sec translocase complex, as well as at least some lipoproteins.</text>
</comment>
<comment type="subcellular location">
    <subcellularLocation>
        <location evidence="1">Cell membrane</location>
        <topology evidence="1">Multi-pass membrane protein</topology>
    </subcellularLocation>
</comment>
<comment type="similarity">
    <text evidence="1">Belongs to the OXA1/ALB3/YidC family. Type 2 subfamily.</text>
</comment>
<accession>Q88RX1</accession>
<accession>F9ULM8</accession>
<proteinExistence type="inferred from homology"/>
<gene>
    <name evidence="1" type="primary">yidC2</name>
    <name type="ordered locus">lp_3687</name>
</gene>
<evidence type="ECO:0000255" key="1">
    <source>
        <dbReference type="HAMAP-Rule" id="MF_01811"/>
    </source>
</evidence>
<evidence type="ECO:0000256" key="2">
    <source>
        <dbReference type="SAM" id="MobiDB-lite"/>
    </source>
</evidence>
<organism>
    <name type="scientific">Lactiplantibacillus plantarum (strain ATCC BAA-793 / NCIMB 8826 / WCFS1)</name>
    <name type="common">Lactobacillus plantarum</name>
    <dbReference type="NCBI Taxonomy" id="220668"/>
    <lineage>
        <taxon>Bacteria</taxon>
        <taxon>Bacillati</taxon>
        <taxon>Bacillota</taxon>
        <taxon>Bacilli</taxon>
        <taxon>Lactobacillales</taxon>
        <taxon>Lactobacillaceae</taxon>
        <taxon>Lactiplantibacillus</taxon>
    </lineage>
</organism>
<name>YIDC2_LACPL</name>
<protein>
    <recommendedName>
        <fullName evidence="1">Membrane protein insertase YidC 2</fullName>
    </recommendedName>
    <alternativeName>
        <fullName evidence="1">Foldase YidC 2</fullName>
    </alternativeName>
    <alternativeName>
        <fullName evidence="1">Membrane integrase YidC 2</fullName>
    </alternativeName>
    <alternativeName>
        <fullName evidence="1">Membrane protein YidC 2</fullName>
    </alternativeName>
</protein>
<reference key="1">
    <citation type="journal article" date="2003" name="Proc. Natl. Acad. Sci. U.S.A.">
        <title>Complete genome sequence of Lactobacillus plantarum WCFS1.</title>
        <authorList>
            <person name="Kleerebezem M."/>
            <person name="Boekhorst J."/>
            <person name="van Kranenburg R."/>
            <person name="Molenaar D."/>
            <person name="Kuipers O.P."/>
            <person name="Leer R."/>
            <person name="Tarchini R."/>
            <person name="Peters S.A."/>
            <person name="Sandbrink H.M."/>
            <person name="Fiers M.W.E.J."/>
            <person name="Stiekema W."/>
            <person name="Klein Lankhorst R.M."/>
            <person name="Bron P.A."/>
            <person name="Hoffer S.M."/>
            <person name="Nierop Groot M.N."/>
            <person name="Kerkhoven R."/>
            <person name="De Vries M."/>
            <person name="Ursing B."/>
            <person name="De Vos W.M."/>
            <person name="Siezen R.J."/>
        </authorList>
    </citation>
    <scope>NUCLEOTIDE SEQUENCE [LARGE SCALE GENOMIC DNA]</scope>
    <source>
        <strain>ATCC BAA-793 / NCIMB 8826 / WCFS1</strain>
    </source>
</reference>
<reference key="2">
    <citation type="journal article" date="2012" name="J. Bacteriol.">
        <title>Complete resequencing and reannotation of the Lactobacillus plantarum WCFS1 genome.</title>
        <authorList>
            <person name="Siezen R.J."/>
            <person name="Francke C."/>
            <person name="Renckens B."/>
            <person name="Boekhorst J."/>
            <person name="Wels M."/>
            <person name="Kleerebezem M."/>
            <person name="van Hijum S.A."/>
        </authorList>
    </citation>
    <scope>NUCLEOTIDE SEQUENCE [LARGE SCALE GENOMIC DNA]</scope>
    <scope>GENOME REANNOTATION</scope>
    <source>
        <strain>ATCC BAA-793 / NCIMB 8826 / WCFS1</strain>
    </source>
</reference>
<dbReference type="EMBL" id="AL935263">
    <property type="protein sequence ID" value="CCC80635.1"/>
    <property type="molecule type" value="Genomic_DNA"/>
</dbReference>
<dbReference type="RefSeq" id="YP_004891149.1">
    <property type="nucleotide sequence ID" value="NC_004567.2"/>
</dbReference>
<dbReference type="SMR" id="Q88RX1"/>
<dbReference type="STRING" id="220668.lp_3687"/>
<dbReference type="EnsemblBacteria" id="CCC80635">
    <property type="protein sequence ID" value="CCC80635"/>
    <property type="gene ID" value="lp_3687"/>
</dbReference>
<dbReference type="KEGG" id="lpl:lp_3687"/>
<dbReference type="PATRIC" id="fig|220668.9.peg.3079"/>
<dbReference type="eggNOG" id="COG0706">
    <property type="taxonomic scope" value="Bacteria"/>
</dbReference>
<dbReference type="HOGENOM" id="CLU_036138_5_0_9"/>
<dbReference type="OrthoDB" id="9780552at2"/>
<dbReference type="PhylomeDB" id="Q88RX1"/>
<dbReference type="Proteomes" id="UP000000432">
    <property type="component" value="Chromosome"/>
</dbReference>
<dbReference type="GO" id="GO:0005886">
    <property type="term" value="C:plasma membrane"/>
    <property type="evidence" value="ECO:0007669"/>
    <property type="project" value="UniProtKB-SubCell"/>
</dbReference>
<dbReference type="GO" id="GO:0032977">
    <property type="term" value="F:membrane insertase activity"/>
    <property type="evidence" value="ECO:0007669"/>
    <property type="project" value="InterPro"/>
</dbReference>
<dbReference type="GO" id="GO:0051205">
    <property type="term" value="P:protein insertion into membrane"/>
    <property type="evidence" value="ECO:0007669"/>
    <property type="project" value="TreeGrafter"/>
</dbReference>
<dbReference type="GO" id="GO:0015031">
    <property type="term" value="P:protein transport"/>
    <property type="evidence" value="ECO:0007669"/>
    <property type="project" value="UniProtKB-KW"/>
</dbReference>
<dbReference type="CDD" id="cd20070">
    <property type="entry name" value="5TM_YidC_Alb3"/>
    <property type="match status" value="1"/>
</dbReference>
<dbReference type="HAMAP" id="MF_01811">
    <property type="entry name" value="YidC_type2"/>
    <property type="match status" value="1"/>
</dbReference>
<dbReference type="InterPro" id="IPR001708">
    <property type="entry name" value="YidC/ALB3/OXA1/COX18"/>
</dbReference>
<dbReference type="InterPro" id="IPR028055">
    <property type="entry name" value="YidC/Oxa/ALB_C"/>
</dbReference>
<dbReference type="InterPro" id="IPR023060">
    <property type="entry name" value="YidC/YidC1/YidC2_Firmicutes"/>
</dbReference>
<dbReference type="InterPro" id="IPR047196">
    <property type="entry name" value="YidC_ALB_C"/>
</dbReference>
<dbReference type="NCBIfam" id="TIGR03592">
    <property type="entry name" value="yidC_oxa1_cterm"/>
    <property type="match status" value="1"/>
</dbReference>
<dbReference type="PANTHER" id="PTHR12428:SF65">
    <property type="entry name" value="CYTOCHROME C OXIDASE ASSEMBLY PROTEIN COX18, MITOCHONDRIAL"/>
    <property type="match status" value="1"/>
</dbReference>
<dbReference type="PANTHER" id="PTHR12428">
    <property type="entry name" value="OXA1"/>
    <property type="match status" value="1"/>
</dbReference>
<dbReference type="Pfam" id="PF02096">
    <property type="entry name" value="60KD_IMP"/>
    <property type="match status" value="1"/>
</dbReference>
<dbReference type="PRINTS" id="PR00701">
    <property type="entry name" value="60KDINNERMP"/>
</dbReference>
<dbReference type="PROSITE" id="PS51257">
    <property type="entry name" value="PROKAR_LIPOPROTEIN"/>
    <property type="match status" value="1"/>
</dbReference>
<feature type="signal peptide" evidence="1">
    <location>
        <begin position="1"/>
        <end position="22"/>
    </location>
</feature>
<feature type="chain" id="PRO_0000020383" description="Membrane protein insertase YidC 2">
    <location>
        <begin position="23"/>
        <end position="277"/>
    </location>
</feature>
<feature type="transmembrane region" description="Helical" evidence="1">
    <location>
        <begin position="35"/>
        <end position="55"/>
    </location>
</feature>
<feature type="transmembrane region" description="Helical" evidence="1">
    <location>
        <begin position="60"/>
        <end position="80"/>
    </location>
</feature>
<feature type="transmembrane region" description="Helical" evidence="1">
    <location>
        <begin position="130"/>
        <end position="150"/>
    </location>
</feature>
<feature type="transmembrane region" description="Helical" evidence="1">
    <location>
        <begin position="170"/>
        <end position="190"/>
    </location>
</feature>
<feature type="transmembrane region" description="Helical" evidence="1">
    <location>
        <begin position="208"/>
        <end position="228"/>
    </location>
</feature>
<feature type="region of interest" description="Disordered" evidence="2">
    <location>
        <begin position="251"/>
        <end position="277"/>
    </location>
</feature>
<feature type="compositionally biased region" description="Basic and acidic residues" evidence="2">
    <location>
        <begin position="251"/>
        <end position="266"/>
    </location>
</feature>
<feature type="compositionally biased region" description="Basic residues" evidence="2">
    <location>
        <begin position="267"/>
        <end position="277"/>
    </location>
</feature>
<feature type="lipid moiety-binding region" description="N-palmitoyl cysteine" evidence="1">
    <location>
        <position position="23"/>
    </location>
</feature>
<feature type="lipid moiety-binding region" description="S-diacylglycerol cysteine" evidence="1">
    <location>
        <position position="23"/>
    </location>
</feature>
<keyword id="KW-1003">Cell membrane</keyword>
<keyword id="KW-0143">Chaperone</keyword>
<keyword id="KW-0449">Lipoprotein</keyword>
<keyword id="KW-0472">Membrane</keyword>
<keyword id="KW-0564">Palmitate</keyword>
<keyword id="KW-0653">Protein transport</keyword>
<keyword id="KW-1185">Reference proteome</keyword>
<keyword id="KW-0732">Signal</keyword>
<keyword id="KW-0812">Transmembrane</keyword>
<keyword id="KW-1133">Transmembrane helix</keyword>
<keyword id="KW-0813">Transport</keyword>